<accession>C0Q7X2</accession>
<protein>
    <recommendedName>
        <fullName evidence="1">Trigger factor</fullName>
        <shortName evidence="1">TF</shortName>
        <ecNumber evidence="1">5.2.1.8</ecNumber>
    </recommendedName>
    <alternativeName>
        <fullName evidence="1">PPIase</fullName>
    </alternativeName>
</protein>
<name>TIG_SALPC</name>
<reference key="1">
    <citation type="journal article" date="2009" name="PLoS ONE">
        <title>Salmonella paratyphi C: genetic divergence from Salmonella choleraesuis and pathogenic convergence with Salmonella typhi.</title>
        <authorList>
            <person name="Liu W.-Q."/>
            <person name="Feng Y."/>
            <person name="Wang Y."/>
            <person name="Zou Q.-H."/>
            <person name="Chen F."/>
            <person name="Guo J.-T."/>
            <person name="Peng Y.-H."/>
            <person name="Jin Y."/>
            <person name="Li Y.-G."/>
            <person name="Hu S.-N."/>
            <person name="Johnston R.N."/>
            <person name="Liu G.-R."/>
            <person name="Liu S.-L."/>
        </authorList>
    </citation>
    <scope>NUCLEOTIDE SEQUENCE [LARGE SCALE GENOMIC DNA]</scope>
    <source>
        <strain>RKS4594</strain>
    </source>
</reference>
<comment type="function">
    <text evidence="1">Involved in protein export. Acts as a chaperone by maintaining the newly synthesized protein in an open conformation. Functions as a peptidyl-prolyl cis-trans isomerase.</text>
</comment>
<comment type="catalytic activity">
    <reaction evidence="1">
        <text>[protein]-peptidylproline (omega=180) = [protein]-peptidylproline (omega=0)</text>
        <dbReference type="Rhea" id="RHEA:16237"/>
        <dbReference type="Rhea" id="RHEA-COMP:10747"/>
        <dbReference type="Rhea" id="RHEA-COMP:10748"/>
        <dbReference type="ChEBI" id="CHEBI:83833"/>
        <dbReference type="ChEBI" id="CHEBI:83834"/>
        <dbReference type="EC" id="5.2.1.8"/>
    </reaction>
</comment>
<comment type="subcellular location">
    <subcellularLocation>
        <location>Cytoplasm</location>
    </subcellularLocation>
    <text evidence="1">About half TF is bound to the ribosome near the polypeptide exit tunnel while the other half is free in the cytoplasm.</text>
</comment>
<comment type="domain">
    <text evidence="1">Consists of 3 domains; the N-terminus binds the ribosome, the middle domain has PPIase activity, while the C-terminus has intrinsic chaperone activity on its own.</text>
</comment>
<comment type="similarity">
    <text evidence="1">Belongs to the FKBP-type PPIase family. Tig subfamily.</text>
</comment>
<keyword id="KW-0131">Cell cycle</keyword>
<keyword id="KW-0132">Cell division</keyword>
<keyword id="KW-0143">Chaperone</keyword>
<keyword id="KW-0963">Cytoplasm</keyword>
<keyword id="KW-0413">Isomerase</keyword>
<keyword id="KW-0697">Rotamase</keyword>
<proteinExistence type="inferred from homology"/>
<gene>
    <name evidence="1" type="primary">tig</name>
    <name type="ordered locus">SPC_0461</name>
</gene>
<sequence>MQVSVETTQGLGRRVTITIAADSIETAVKSELVNVAKKVRIDGFRKGKVPMNIVAQRYGASVRQDVLGDLMSRNFVDAIIKEKINPAGAPNYVPGEYKVGEDFTYSVEFEVYPEVELTGLESIEVEKPVVEVTDADVDVMLDTLRKQQATWKEKDGAADAEDRVTIDFTGSVDGEEFEGGKATDFVLAMGQGRMIPGFEDGVKGHKAGEEFTIDVTFPEEYHAENLKGKAAKFVINLKKVEERGLPELTEEFIKRFGVEDGSVAGLRAEVRKNMERELKGAVRNRVKSQAIEGLVKANDIDVPAALIDSEIDVLRRQAAQRFGGNEKQALELPRELFEEQAKRRVVVGLLLGEVIRTNELKADEERVKGLIEEMASAYEDPKEVIEFYSKNKELMDNMRNVALEEQAVEAVLAKAKVSEKATSFNELMNQQA</sequence>
<feature type="chain" id="PRO_1000198174" description="Trigger factor">
    <location>
        <begin position="1"/>
        <end position="432"/>
    </location>
</feature>
<feature type="domain" description="PPIase FKBP-type" evidence="1">
    <location>
        <begin position="161"/>
        <end position="246"/>
    </location>
</feature>
<organism>
    <name type="scientific">Salmonella paratyphi C (strain RKS4594)</name>
    <dbReference type="NCBI Taxonomy" id="476213"/>
    <lineage>
        <taxon>Bacteria</taxon>
        <taxon>Pseudomonadati</taxon>
        <taxon>Pseudomonadota</taxon>
        <taxon>Gammaproteobacteria</taxon>
        <taxon>Enterobacterales</taxon>
        <taxon>Enterobacteriaceae</taxon>
        <taxon>Salmonella</taxon>
    </lineage>
</organism>
<evidence type="ECO:0000255" key="1">
    <source>
        <dbReference type="HAMAP-Rule" id="MF_00303"/>
    </source>
</evidence>
<dbReference type="EC" id="5.2.1.8" evidence="1"/>
<dbReference type="EMBL" id="CP000857">
    <property type="protein sequence ID" value="ACN44642.1"/>
    <property type="molecule type" value="Genomic_DNA"/>
</dbReference>
<dbReference type="RefSeq" id="WP_001198408.1">
    <property type="nucleotide sequence ID" value="NC_012125.1"/>
</dbReference>
<dbReference type="SMR" id="C0Q7X2"/>
<dbReference type="KEGG" id="sei:SPC_0461"/>
<dbReference type="HOGENOM" id="CLU_033058_2_0_6"/>
<dbReference type="Proteomes" id="UP000001599">
    <property type="component" value="Chromosome"/>
</dbReference>
<dbReference type="GO" id="GO:0005737">
    <property type="term" value="C:cytoplasm"/>
    <property type="evidence" value="ECO:0007669"/>
    <property type="project" value="UniProtKB-SubCell"/>
</dbReference>
<dbReference type="GO" id="GO:0003755">
    <property type="term" value="F:peptidyl-prolyl cis-trans isomerase activity"/>
    <property type="evidence" value="ECO:0007669"/>
    <property type="project" value="UniProtKB-UniRule"/>
</dbReference>
<dbReference type="GO" id="GO:0044183">
    <property type="term" value="F:protein folding chaperone"/>
    <property type="evidence" value="ECO:0007669"/>
    <property type="project" value="TreeGrafter"/>
</dbReference>
<dbReference type="GO" id="GO:0043022">
    <property type="term" value="F:ribosome binding"/>
    <property type="evidence" value="ECO:0007669"/>
    <property type="project" value="TreeGrafter"/>
</dbReference>
<dbReference type="GO" id="GO:0051083">
    <property type="term" value="P:'de novo' cotranslational protein folding"/>
    <property type="evidence" value="ECO:0007669"/>
    <property type="project" value="TreeGrafter"/>
</dbReference>
<dbReference type="GO" id="GO:0051301">
    <property type="term" value="P:cell division"/>
    <property type="evidence" value="ECO:0007669"/>
    <property type="project" value="UniProtKB-KW"/>
</dbReference>
<dbReference type="GO" id="GO:0061077">
    <property type="term" value="P:chaperone-mediated protein folding"/>
    <property type="evidence" value="ECO:0007669"/>
    <property type="project" value="TreeGrafter"/>
</dbReference>
<dbReference type="GO" id="GO:0015031">
    <property type="term" value="P:protein transport"/>
    <property type="evidence" value="ECO:0007669"/>
    <property type="project" value="UniProtKB-UniRule"/>
</dbReference>
<dbReference type="GO" id="GO:0043335">
    <property type="term" value="P:protein unfolding"/>
    <property type="evidence" value="ECO:0007669"/>
    <property type="project" value="TreeGrafter"/>
</dbReference>
<dbReference type="FunFam" id="1.10.3120.10:FF:000001">
    <property type="entry name" value="Trigger factor"/>
    <property type="match status" value="1"/>
</dbReference>
<dbReference type="FunFam" id="3.10.50.40:FF:000001">
    <property type="entry name" value="Trigger factor"/>
    <property type="match status" value="1"/>
</dbReference>
<dbReference type="FunFam" id="3.30.70.1050:FF:000001">
    <property type="entry name" value="Trigger factor"/>
    <property type="match status" value="1"/>
</dbReference>
<dbReference type="Gene3D" id="3.10.50.40">
    <property type="match status" value="1"/>
</dbReference>
<dbReference type="Gene3D" id="3.30.70.1050">
    <property type="entry name" value="Trigger factor ribosome-binding domain"/>
    <property type="match status" value="1"/>
</dbReference>
<dbReference type="Gene3D" id="1.10.3120.10">
    <property type="entry name" value="Trigger factor, C-terminal domain"/>
    <property type="match status" value="1"/>
</dbReference>
<dbReference type="HAMAP" id="MF_00303">
    <property type="entry name" value="Trigger_factor_Tig"/>
    <property type="match status" value="1"/>
</dbReference>
<dbReference type="InterPro" id="IPR046357">
    <property type="entry name" value="PPIase_dom_sf"/>
</dbReference>
<dbReference type="InterPro" id="IPR001179">
    <property type="entry name" value="PPIase_FKBP_dom"/>
</dbReference>
<dbReference type="InterPro" id="IPR005215">
    <property type="entry name" value="Trig_fac"/>
</dbReference>
<dbReference type="InterPro" id="IPR008880">
    <property type="entry name" value="Trigger_fac_C"/>
</dbReference>
<dbReference type="InterPro" id="IPR037041">
    <property type="entry name" value="Trigger_fac_C_sf"/>
</dbReference>
<dbReference type="InterPro" id="IPR008881">
    <property type="entry name" value="Trigger_fac_ribosome-bd_bac"/>
</dbReference>
<dbReference type="InterPro" id="IPR036611">
    <property type="entry name" value="Trigger_fac_ribosome-bd_sf"/>
</dbReference>
<dbReference type="InterPro" id="IPR027304">
    <property type="entry name" value="Trigger_fact/SurA_dom_sf"/>
</dbReference>
<dbReference type="NCBIfam" id="TIGR00115">
    <property type="entry name" value="tig"/>
    <property type="match status" value="1"/>
</dbReference>
<dbReference type="PANTHER" id="PTHR30560">
    <property type="entry name" value="TRIGGER FACTOR CHAPERONE AND PEPTIDYL-PROLYL CIS/TRANS ISOMERASE"/>
    <property type="match status" value="1"/>
</dbReference>
<dbReference type="PANTHER" id="PTHR30560:SF3">
    <property type="entry name" value="TRIGGER FACTOR-LIKE PROTEIN TIG, CHLOROPLASTIC"/>
    <property type="match status" value="1"/>
</dbReference>
<dbReference type="Pfam" id="PF00254">
    <property type="entry name" value="FKBP_C"/>
    <property type="match status" value="1"/>
</dbReference>
<dbReference type="Pfam" id="PF05698">
    <property type="entry name" value="Trigger_C"/>
    <property type="match status" value="1"/>
</dbReference>
<dbReference type="Pfam" id="PF05697">
    <property type="entry name" value="Trigger_N"/>
    <property type="match status" value="1"/>
</dbReference>
<dbReference type="PIRSF" id="PIRSF003095">
    <property type="entry name" value="Trigger_factor"/>
    <property type="match status" value="1"/>
</dbReference>
<dbReference type="SUPFAM" id="SSF54534">
    <property type="entry name" value="FKBP-like"/>
    <property type="match status" value="1"/>
</dbReference>
<dbReference type="SUPFAM" id="SSF109998">
    <property type="entry name" value="Triger factor/SurA peptide-binding domain-like"/>
    <property type="match status" value="1"/>
</dbReference>
<dbReference type="SUPFAM" id="SSF102735">
    <property type="entry name" value="Trigger factor ribosome-binding domain"/>
    <property type="match status" value="1"/>
</dbReference>
<dbReference type="PROSITE" id="PS50059">
    <property type="entry name" value="FKBP_PPIASE"/>
    <property type="match status" value="1"/>
</dbReference>